<proteinExistence type="evidence at protein level"/>
<sequence>MAINFEQVNFSYGAGTTLAQPILHDINVTIPDGQVTAIIGQTGSGKSTFIQHLNGLLKPTTGRVVIDDFVLTSDLKEKNLTSLRARVGMVFQFPENQLFANTVLEDVMYAPINFGYAKADAEFAAKTALKQVNVSEELWDKSPFELSGGQMRRVAMAGTLASNPDIIVLDEPAAGLDPKGQKELLAIVRGLKEAGKLVVFISHQMDHVIAVADHVIVMHDGGVVAEGTPVEIFNKDLVWFKTVALDLPKAGQFAEQLRQKGHILRHRPLLLTELATMLNEEKRHE</sequence>
<name>ECFA2_LEUMM</name>
<organism>
    <name type="scientific">Leuconostoc mesenteroides subsp. mesenteroides (strain ATCC 8293 / DSM 20343 / BCRC 11652 / CCM 1803 / JCM 6124 / NCDO 523 / NBRC 100496 / NCIMB 8023 / NCTC 12954 / NRRL B-1118 / 37Y)</name>
    <dbReference type="NCBI Taxonomy" id="203120"/>
    <lineage>
        <taxon>Bacteria</taxon>
        <taxon>Bacillati</taxon>
        <taxon>Bacillota</taxon>
        <taxon>Bacilli</taxon>
        <taxon>Lactobacillales</taxon>
        <taxon>Lactobacillaceae</taxon>
        <taxon>Leuconostoc</taxon>
    </lineage>
</organism>
<accession>Q03ZL5</accession>
<comment type="function">
    <text evidence="2 3 4">ATP-binding (A) component of a common energy-coupling factor (ECF) ABC-transporter complex. Unlike classic ABC transporters this ECF transporter provides the energy necessary to transport a number of different substrates including 5-formyltetrahydrofolate, pantothenate and riboflavin. Expression of the complex plus FolT in E.coli allows 5-formyltetrahydrofolate uptake; 5-formyltetrahydrofolate is not taken up in the absence of FolT or the EcfA1A2T complex.</text>
</comment>
<comment type="subunit">
    <text evidence="3 4">Forms a stable energy-coupling factor (ECF) transporter complex probably composed of 2 membrane-embedded substrate-binding proteins (S component), 2 ATP-binding proteins (A component) and 2 transmembrane proteins (T component). This complex interacts with a number of substrate-specific components, including FolT, PanT and RibU for 5-formyltetrahydrofolate, pantothenate and riboflavin respectively.</text>
</comment>
<comment type="subcellular location">
    <subcellularLocation>
        <location evidence="5 6">Cell membrane</location>
        <topology evidence="5 6">Peripheral membrane protein</topology>
    </subcellularLocation>
</comment>
<comment type="similarity">
    <text evidence="2">Belongs to the ABC transporter superfamily. Energy-coupling factor EcfA family.</text>
</comment>
<dbReference type="EC" id="7.-.-.-" evidence="2"/>
<dbReference type="EMBL" id="CP000414">
    <property type="protein sequence ID" value="ABJ61357.1"/>
    <property type="molecule type" value="Genomic_DNA"/>
</dbReference>
<dbReference type="RefSeq" id="WP_011679141.1">
    <property type="nucleotide sequence ID" value="NC_008531.1"/>
</dbReference>
<dbReference type="SMR" id="Q03ZL5"/>
<dbReference type="EnsemblBacteria" id="ABJ61357">
    <property type="protein sequence ID" value="ABJ61357"/>
    <property type="gene ID" value="LEUM_0226"/>
</dbReference>
<dbReference type="GeneID" id="29577736"/>
<dbReference type="KEGG" id="lme:LEUM_0226"/>
<dbReference type="eggNOG" id="COG1122">
    <property type="taxonomic scope" value="Bacteria"/>
</dbReference>
<dbReference type="HOGENOM" id="CLU_000604_1_22_9"/>
<dbReference type="Proteomes" id="UP000000362">
    <property type="component" value="Chromosome"/>
</dbReference>
<dbReference type="GO" id="GO:0043190">
    <property type="term" value="C:ATP-binding cassette (ABC) transporter complex"/>
    <property type="evidence" value="ECO:0007669"/>
    <property type="project" value="TreeGrafter"/>
</dbReference>
<dbReference type="GO" id="GO:0005524">
    <property type="term" value="F:ATP binding"/>
    <property type="evidence" value="ECO:0007669"/>
    <property type="project" value="UniProtKB-KW"/>
</dbReference>
<dbReference type="GO" id="GO:0016887">
    <property type="term" value="F:ATP hydrolysis activity"/>
    <property type="evidence" value="ECO:0007669"/>
    <property type="project" value="InterPro"/>
</dbReference>
<dbReference type="GO" id="GO:0042626">
    <property type="term" value="F:ATPase-coupled transmembrane transporter activity"/>
    <property type="evidence" value="ECO:0007669"/>
    <property type="project" value="TreeGrafter"/>
</dbReference>
<dbReference type="CDD" id="cd03225">
    <property type="entry name" value="ABC_cobalt_CbiO_domain1"/>
    <property type="match status" value="1"/>
</dbReference>
<dbReference type="FunFam" id="3.40.50.300:FF:000224">
    <property type="entry name" value="Energy-coupling factor transporter ATP-binding protein EcfA"/>
    <property type="match status" value="1"/>
</dbReference>
<dbReference type="Gene3D" id="3.40.50.300">
    <property type="entry name" value="P-loop containing nucleotide triphosphate hydrolases"/>
    <property type="match status" value="1"/>
</dbReference>
<dbReference type="InterPro" id="IPR003593">
    <property type="entry name" value="AAA+_ATPase"/>
</dbReference>
<dbReference type="InterPro" id="IPR003439">
    <property type="entry name" value="ABC_transporter-like_ATP-bd"/>
</dbReference>
<dbReference type="InterPro" id="IPR017871">
    <property type="entry name" value="ABC_transporter-like_CS"/>
</dbReference>
<dbReference type="InterPro" id="IPR015856">
    <property type="entry name" value="ABC_transpr_CbiO/EcfA_su"/>
</dbReference>
<dbReference type="InterPro" id="IPR050095">
    <property type="entry name" value="ECF_ABC_transporter_ATP-bd"/>
</dbReference>
<dbReference type="InterPro" id="IPR030946">
    <property type="entry name" value="EcfA2"/>
</dbReference>
<dbReference type="InterPro" id="IPR027417">
    <property type="entry name" value="P-loop_NTPase"/>
</dbReference>
<dbReference type="NCBIfam" id="TIGR04521">
    <property type="entry name" value="ECF_ATPase_2"/>
    <property type="match status" value="1"/>
</dbReference>
<dbReference type="PANTHER" id="PTHR43553:SF27">
    <property type="entry name" value="ENERGY-COUPLING FACTOR TRANSPORTER ATP-BINDING PROTEIN ECFA2"/>
    <property type="match status" value="1"/>
</dbReference>
<dbReference type="PANTHER" id="PTHR43553">
    <property type="entry name" value="HEAVY METAL TRANSPORTER"/>
    <property type="match status" value="1"/>
</dbReference>
<dbReference type="Pfam" id="PF00005">
    <property type="entry name" value="ABC_tran"/>
    <property type="match status" value="1"/>
</dbReference>
<dbReference type="SMART" id="SM00382">
    <property type="entry name" value="AAA"/>
    <property type="match status" value="1"/>
</dbReference>
<dbReference type="SUPFAM" id="SSF52540">
    <property type="entry name" value="P-loop containing nucleoside triphosphate hydrolases"/>
    <property type="match status" value="1"/>
</dbReference>
<dbReference type="PROSITE" id="PS00211">
    <property type="entry name" value="ABC_TRANSPORTER_1"/>
    <property type="match status" value="1"/>
</dbReference>
<dbReference type="PROSITE" id="PS50893">
    <property type="entry name" value="ABC_TRANSPORTER_2"/>
    <property type="match status" value="1"/>
</dbReference>
<dbReference type="PROSITE" id="PS51246">
    <property type="entry name" value="CBIO"/>
    <property type="match status" value="1"/>
</dbReference>
<keyword id="KW-0067">ATP-binding</keyword>
<keyword id="KW-1003">Cell membrane</keyword>
<keyword id="KW-0472">Membrane</keyword>
<keyword id="KW-0547">Nucleotide-binding</keyword>
<keyword id="KW-1185">Reference proteome</keyword>
<keyword id="KW-1278">Translocase</keyword>
<keyword id="KW-0813">Transport</keyword>
<reference key="1">
    <citation type="journal article" date="2006" name="Proc. Natl. Acad. Sci. U.S.A.">
        <title>Comparative genomics of the lactic acid bacteria.</title>
        <authorList>
            <person name="Makarova K.S."/>
            <person name="Slesarev A."/>
            <person name="Wolf Y.I."/>
            <person name="Sorokin A."/>
            <person name="Mirkin B."/>
            <person name="Koonin E.V."/>
            <person name="Pavlov A."/>
            <person name="Pavlova N."/>
            <person name="Karamychev V."/>
            <person name="Polouchine N."/>
            <person name="Shakhova V."/>
            <person name="Grigoriev I."/>
            <person name="Lou Y."/>
            <person name="Rohksar D."/>
            <person name="Lucas S."/>
            <person name="Huang K."/>
            <person name="Goodstein D.M."/>
            <person name="Hawkins T."/>
            <person name="Plengvidhya V."/>
            <person name="Welker D."/>
            <person name="Hughes J."/>
            <person name="Goh Y."/>
            <person name="Benson A."/>
            <person name="Baldwin K."/>
            <person name="Lee J.-H."/>
            <person name="Diaz-Muniz I."/>
            <person name="Dosti B."/>
            <person name="Smeianov V."/>
            <person name="Wechter W."/>
            <person name="Barabote R."/>
            <person name="Lorca G."/>
            <person name="Altermann E."/>
            <person name="Barrangou R."/>
            <person name="Ganesan B."/>
            <person name="Xie Y."/>
            <person name="Rawsthorne H."/>
            <person name="Tamir D."/>
            <person name="Parker C."/>
            <person name="Breidt F."/>
            <person name="Broadbent J.R."/>
            <person name="Hutkins R."/>
            <person name="O'Sullivan D."/>
            <person name="Steele J."/>
            <person name="Unlu G."/>
            <person name="Saier M.H. Jr."/>
            <person name="Klaenhammer T."/>
            <person name="Richardson P."/>
            <person name="Kozyavkin S."/>
            <person name="Weimer B.C."/>
            <person name="Mills D.A."/>
        </authorList>
    </citation>
    <scope>NUCLEOTIDE SEQUENCE [LARGE SCALE GENOMIC DNA]</scope>
    <source>
        <strain>ATCC 8293 / DSM 20343 / BCRC 11652 / CCM 1803 / JCM 6124 / NCDO 523 / NBRC 100496 / NCIMB 8023 / NCTC 12954 / NRRL B-1118 / 37Y</strain>
    </source>
</reference>
<reference key="2">
    <citation type="journal article" date="2009" name="J. Bacteriol.">
        <title>A novel class of modular transporters for vitamins in prokaryotes.</title>
        <authorList>
            <person name="Rodionov D.A."/>
            <person name="Hebbeln P."/>
            <person name="Eudes A."/>
            <person name="ter Beek J."/>
            <person name="Rodionova I.A."/>
            <person name="Erkens G.B."/>
            <person name="Slotboom D.J."/>
            <person name="Gelfand M.S."/>
            <person name="Osterman A.L."/>
            <person name="Hanson A.D."/>
            <person name="Eitinger T."/>
        </authorList>
    </citation>
    <scope>FUNCTION AS A TRANSPORT COMPONENT</scope>
    <scope>SUBUNIT</scope>
    <scope>SUBCELLULAR LOCATION</scope>
    <scope>SUBSTRATES</scope>
    <scope>EXPRESSION IN E.COLI</scope>
    <source>
        <strain>ATCC 8293 / DSM 20343 / BCRC 11652 / CCM 1803 / JCM 6124 / NCDO 523 / NBRC 100496 / NCIMB 8023 / NCTC 12954 / NRRL B-1118 / 37Y</strain>
    </source>
</reference>
<reference key="3">
    <citation type="journal article" date="2009" name="J. Bacteriol.">
        <title>Two essential arginine residues in the T components of energy-coupling factor transporters.</title>
        <authorList>
            <person name="Neubauer O."/>
            <person name="Alfandega A."/>
            <person name="Schoknecht J."/>
            <person name="Sternberg U."/>
            <person name="Pohlmann A."/>
            <person name="Eitinger T."/>
        </authorList>
    </citation>
    <scope>FUNCTION AS A TRANSPORT COMPONENT</scope>
    <scope>SUBCELLULAR LOCATION</scope>
    <scope>SUBUNIT</scope>
    <scope>EXPRESSION IN E.COLI</scope>
    <source>
        <strain>ATCC 8293 / DSM 20343 / BCRC 11652 / CCM 1803 / JCM 6124 / NCDO 523 / NBRC 100496 / NCIMB 8023 / NCTC 12954 / NRRL B-1118 / 37Y</strain>
    </source>
</reference>
<evidence type="ECO:0000255" key="1"/>
<evidence type="ECO:0000255" key="2">
    <source>
        <dbReference type="HAMAP-Rule" id="MF_01710"/>
    </source>
</evidence>
<evidence type="ECO:0000269" key="3">
    <source>
    </source>
</evidence>
<evidence type="ECO:0000269" key="4">
    <source>
    </source>
</evidence>
<evidence type="ECO:0000305" key="5">
    <source>
    </source>
</evidence>
<evidence type="ECO:0000305" key="6">
    <source>
    </source>
</evidence>
<protein>
    <recommendedName>
        <fullName evidence="2">Energy-coupling factor transporter ATP-binding protein EcfA2</fullName>
        <shortName evidence="2">ECF transporter A component EcfA2</shortName>
        <ecNumber evidence="2">7.-.-.-</ecNumber>
    </recommendedName>
    <alternativeName>
        <fullName>ECF transporter A component EcfA'</fullName>
    </alternativeName>
</protein>
<feature type="chain" id="PRO_0000287962" description="Energy-coupling factor transporter ATP-binding protein EcfA2">
    <location>
        <begin position="1"/>
        <end position="285"/>
    </location>
</feature>
<feature type="domain" description="ABC transporter" evidence="2">
    <location>
        <begin position="3"/>
        <end position="245"/>
    </location>
</feature>
<feature type="active site" description="Proton acceptor" evidence="1">
    <location>
        <position position="171"/>
    </location>
</feature>
<feature type="binding site" evidence="2">
    <location>
        <begin position="40"/>
        <end position="47"/>
    </location>
    <ligand>
        <name>ATP</name>
        <dbReference type="ChEBI" id="CHEBI:30616"/>
    </ligand>
</feature>
<gene>
    <name evidence="2" type="primary">ecfA2</name>
    <name type="synonym">cbiO2</name>
    <name type="synonym">ecfA'</name>
    <name type="ordered locus">LEUM_0226</name>
</gene>